<gene>
    <name type="primary">MPTX</name>
</gene>
<sequence length="217" mass="24702">MEKLLLGVLLLAFLPEGMTQKDLRGKVFIFPEQSDTAYVTLIPRVRKPLRSFTLCLKAFTDLTRPYSLFSYSTKSKDNELLLFVNKVGEYELHIGNTKVTFKVPRPPYGPVHLCVSWESVSGIAELWMNSRPVGRKGLRRGYTLGQDARIILGQEQDSFGGKFDAKQSFVGEIWDVSLWDHVVSLKNLCFTCYTSNILNWKALIYQAKGYVVVKPKL</sequence>
<evidence type="ECO:0000250" key="1"/>
<evidence type="ECO:0000255" key="2"/>
<evidence type="ECO:0000255" key="3">
    <source>
        <dbReference type="PROSITE-ProRule" id="PRU01172"/>
    </source>
</evidence>
<evidence type="ECO:0000305" key="4"/>
<feature type="signal peptide" evidence="2">
    <location>
        <begin position="1"/>
        <end position="19"/>
    </location>
</feature>
<feature type="chain" id="PRO_0000342392" description="Mucosal pentraxin">
    <location>
        <begin position="20"/>
        <end position="217"/>
    </location>
</feature>
<feature type="domain" description="Pentraxin (PTX)" evidence="3">
    <location>
        <begin position="24"/>
        <end position="217"/>
    </location>
</feature>
<feature type="binding site" evidence="3">
    <location>
        <position position="77"/>
    </location>
    <ligand>
        <name>Ca(2+)</name>
        <dbReference type="ChEBI" id="CHEBI:29108"/>
        <label>1</label>
    </ligand>
</feature>
<feature type="binding site" evidence="3">
    <location>
        <position position="78"/>
    </location>
    <ligand>
        <name>Ca(2+)</name>
        <dbReference type="ChEBI" id="CHEBI:29108"/>
        <label>1</label>
    </ligand>
</feature>
<feature type="binding site" evidence="3">
    <location>
        <position position="155"/>
    </location>
    <ligand>
        <name>Ca(2+)</name>
        <dbReference type="ChEBI" id="CHEBI:29108"/>
        <label>1</label>
    </ligand>
</feature>
<feature type="binding site" evidence="3">
    <location>
        <position position="155"/>
    </location>
    <ligand>
        <name>Ca(2+)</name>
        <dbReference type="ChEBI" id="CHEBI:29108"/>
        <label>2</label>
    </ligand>
</feature>
<feature type="binding site" evidence="3">
    <location>
        <position position="156"/>
    </location>
    <ligand>
        <name>Ca(2+)</name>
        <dbReference type="ChEBI" id="CHEBI:29108"/>
        <label>1</label>
    </ligand>
</feature>
<feature type="binding site" evidence="3">
    <location>
        <position position="157"/>
    </location>
    <ligand>
        <name>Ca(2+)</name>
        <dbReference type="ChEBI" id="CHEBI:29108"/>
        <label>1</label>
    </ligand>
</feature>
<feature type="binding site" evidence="3">
    <location>
        <position position="157"/>
    </location>
    <ligand>
        <name>Ca(2+)</name>
        <dbReference type="ChEBI" id="CHEBI:29108"/>
        <label>2</label>
    </ligand>
</feature>
<feature type="binding site" evidence="3">
    <location>
        <position position="167"/>
    </location>
    <ligand>
        <name>Ca(2+)</name>
        <dbReference type="ChEBI" id="CHEBI:29108"/>
        <label>2</label>
    </ligand>
</feature>
<feature type="disulfide bond" evidence="3">
    <location>
        <begin position="55"/>
        <end position="114"/>
    </location>
</feature>
<proteinExistence type="evidence at transcript level"/>
<organism>
    <name type="scientific">Bos taurus</name>
    <name type="common">Bovine</name>
    <dbReference type="NCBI Taxonomy" id="9913"/>
    <lineage>
        <taxon>Eukaryota</taxon>
        <taxon>Metazoa</taxon>
        <taxon>Chordata</taxon>
        <taxon>Craniata</taxon>
        <taxon>Vertebrata</taxon>
        <taxon>Euteleostomi</taxon>
        <taxon>Mammalia</taxon>
        <taxon>Eutheria</taxon>
        <taxon>Laurasiatheria</taxon>
        <taxon>Artiodactyla</taxon>
        <taxon>Ruminantia</taxon>
        <taxon>Pecora</taxon>
        <taxon>Bovidae</taxon>
        <taxon>Bovinae</taxon>
        <taxon>Bos</taxon>
    </lineage>
</organism>
<keyword id="KW-0106">Calcium</keyword>
<keyword id="KW-1015">Disulfide bond</keyword>
<keyword id="KW-0479">Metal-binding</keyword>
<keyword id="KW-1185">Reference proteome</keyword>
<keyword id="KW-0964">Secreted</keyword>
<keyword id="KW-0732">Signal</keyword>
<protein>
    <recommendedName>
        <fullName>Mucosal pentraxin</fullName>
    </recommendedName>
</protein>
<reference key="1">
    <citation type="submission" date="2005-08" db="EMBL/GenBank/DDBJ databases">
        <authorList>
            <consortium name="NIH - Mammalian Gene Collection (MGC) project"/>
        </authorList>
    </citation>
    <scope>NUCLEOTIDE SEQUENCE [LARGE SCALE MRNA]</scope>
    <source>
        <strain>Crossbred X Angus</strain>
        <tissue>Ileum</tissue>
    </source>
</reference>
<name>MPTX_BOVIN</name>
<comment type="cofactor">
    <cofactor evidence="1">
        <name>Ca(2+)</name>
        <dbReference type="ChEBI" id="CHEBI:29108"/>
    </cofactor>
    <text evidence="1">Binds 2 calcium ions per subunit.</text>
</comment>
<comment type="subunit">
    <text evidence="1">Homopentamer. Pentraxin (or pentaxin) have a discoid arrangement of 5 non-covalently bound subunits (By similarity).</text>
</comment>
<comment type="subcellular location">
    <subcellularLocation>
        <location evidence="1">Secreted</location>
    </subcellularLocation>
</comment>
<comment type="similarity">
    <text evidence="4">Belongs to the pentraxin family.</text>
</comment>
<dbReference type="EMBL" id="BC102093">
    <property type="protein sequence ID" value="AAI02094.1"/>
    <property type="molecule type" value="mRNA"/>
</dbReference>
<dbReference type="RefSeq" id="NP_001029399.1">
    <property type="nucleotide sequence ID" value="NM_001034227.2"/>
</dbReference>
<dbReference type="SMR" id="Q3T166"/>
<dbReference type="FunCoup" id="Q3T166">
    <property type="interactions" value="3"/>
</dbReference>
<dbReference type="STRING" id="9913.ENSBTAP00000017120"/>
<dbReference type="PaxDb" id="9913-ENSBTAP00000017120"/>
<dbReference type="PeptideAtlas" id="Q3T166"/>
<dbReference type="Ensembl" id="ENSBTAT00000017120.4">
    <property type="protein sequence ID" value="ENSBTAP00000017120.3"/>
    <property type="gene ID" value="ENSBTAG00000012884.4"/>
</dbReference>
<dbReference type="GeneID" id="504879"/>
<dbReference type="KEGG" id="bta:504879"/>
<dbReference type="CTD" id="649458"/>
<dbReference type="VEuPathDB" id="HostDB:ENSBTAG00000012884"/>
<dbReference type="VGNC" id="VGNC:108938">
    <property type="gene designation" value="MPTX1"/>
</dbReference>
<dbReference type="eggNOG" id="ENOG502S201">
    <property type="taxonomic scope" value="Eukaryota"/>
</dbReference>
<dbReference type="GeneTree" id="ENSGT01100000263515"/>
<dbReference type="HOGENOM" id="CLU_032051_2_0_1"/>
<dbReference type="InParanoid" id="Q3T166"/>
<dbReference type="OMA" id="SEPSWEQ"/>
<dbReference type="OrthoDB" id="547680at2759"/>
<dbReference type="TreeFam" id="TF330208"/>
<dbReference type="Proteomes" id="UP000009136">
    <property type="component" value="Chromosome 3"/>
</dbReference>
<dbReference type="Bgee" id="ENSBTAG00000012884">
    <property type="expression patterns" value="Expressed in caecum and 44 other cell types or tissues"/>
</dbReference>
<dbReference type="GO" id="GO:0005615">
    <property type="term" value="C:extracellular space"/>
    <property type="evidence" value="ECO:0000318"/>
    <property type="project" value="GO_Central"/>
</dbReference>
<dbReference type="GO" id="GO:0001849">
    <property type="term" value="F:complement component C1q complex binding"/>
    <property type="evidence" value="ECO:0000318"/>
    <property type="project" value="GO_Central"/>
</dbReference>
<dbReference type="GO" id="GO:0046872">
    <property type="term" value="F:metal ion binding"/>
    <property type="evidence" value="ECO:0007669"/>
    <property type="project" value="UniProtKB-KW"/>
</dbReference>
<dbReference type="GO" id="GO:0045087">
    <property type="term" value="P:innate immune response"/>
    <property type="evidence" value="ECO:0000318"/>
    <property type="project" value="GO_Central"/>
</dbReference>
<dbReference type="CDD" id="cd00152">
    <property type="entry name" value="PTX"/>
    <property type="match status" value="1"/>
</dbReference>
<dbReference type="FunFam" id="2.60.120.200:FF:000070">
    <property type="entry name" value="Serum amyloid P-component"/>
    <property type="match status" value="1"/>
</dbReference>
<dbReference type="Gene3D" id="2.60.120.200">
    <property type="match status" value="1"/>
</dbReference>
<dbReference type="InterPro" id="IPR013320">
    <property type="entry name" value="ConA-like_dom_sf"/>
</dbReference>
<dbReference type="InterPro" id="IPR030476">
    <property type="entry name" value="Pentaxin_CS"/>
</dbReference>
<dbReference type="InterPro" id="IPR001759">
    <property type="entry name" value="Pentraxin-related"/>
</dbReference>
<dbReference type="InterPro" id="IPR051005">
    <property type="entry name" value="Pentraxin_domain"/>
</dbReference>
<dbReference type="PANTHER" id="PTHR45869">
    <property type="entry name" value="C-REACTIVE PROTEIN-RELATED"/>
    <property type="match status" value="1"/>
</dbReference>
<dbReference type="PANTHER" id="PTHR45869:SF6">
    <property type="entry name" value="MUCOSAL PENTRAXIN-RELATED"/>
    <property type="match status" value="1"/>
</dbReference>
<dbReference type="Pfam" id="PF00354">
    <property type="entry name" value="Pentaxin"/>
    <property type="match status" value="1"/>
</dbReference>
<dbReference type="PRINTS" id="PR00895">
    <property type="entry name" value="PENTAXIN"/>
</dbReference>
<dbReference type="SMART" id="SM00159">
    <property type="entry name" value="PTX"/>
    <property type="match status" value="1"/>
</dbReference>
<dbReference type="SUPFAM" id="SSF49899">
    <property type="entry name" value="Concanavalin A-like lectins/glucanases"/>
    <property type="match status" value="1"/>
</dbReference>
<dbReference type="PROSITE" id="PS00289">
    <property type="entry name" value="PTX_1"/>
    <property type="match status" value="1"/>
</dbReference>
<dbReference type="PROSITE" id="PS51828">
    <property type="entry name" value="PTX_2"/>
    <property type="match status" value="1"/>
</dbReference>
<accession>Q3T166</accession>